<accession>P79177</accession>
<proteinExistence type="inferred from homology"/>
<dbReference type="EMBL" id="X97738">
    <property type="protein sequence ID" value="CAA66322.1"/>
    <property type="molecule type" value="Genomic_DNA"/>
</dbReference>
<dbReference type="SMR" id="P79177"/>
<dbReference type="STRING" id="9593.ENSGGOP00000005547"/>
<dbReference type="GlyCosmos" id="P79177">
    <property type="glycosylation" value="1 site, No reported glycans"/>
</dbReference>
<dbReference type="eggNOG" id="KOG3656">
    <property type="taxonomic scope" value="Eukaryota"/>
</dbReference>
<dbReference type="InParanoid" id="P79177"/>
<dbReference type="Proteomes" id="UP000001519">
    <property type="component" value="Unplaced"/>
</dbReference>
<dbReference type="GO" id="GO:0005886">
    <property type="term" value="C:plasma membrane"/>
    <property type="evidence" value="ECO:0000318"/>
    <property type="project" value="GO_Central"/>
</dbReference>
<dbReference type="GO" id="GO:0004875">
    <property type="term" value="F:complement receptor activity"/>
    <property type="evidence" value="ECO:0000318"/>
    <property type="project" value="GO_Central"/>
</dbReference>
<dbReference type="GO" id="GO:0004982">
    <property type="term" value="F:N-formyl peptide receptor activity"/>
    <property type="evidence" value="ECO:0000318"/>
    <property type="project" value="GO_Central"/>
</dbReference>
<dbReference type="GO" id="GO:0006935">
    <property type="term" value="P:chemotaxis"/>
    <property type="evidence" value="ECO:0007669"/>
    <property type="project" value="UniProtKB-KW"/>
</dbReference>
<dbReference type="GO" id="GO:0002430">
    <property type="term" value="P:complement receptor mediated signaling pathway"/>
    <property type="evidence" value="ECO:0000318"/>
    <property type="project" value="GO_Central"/>
</dbReference>
<dbReference type="GO" id="GO:0006954">
    <property type="term" value="P:inflammatory response"/>
    <property type="evidence" value="ECO:0000318"/>
    <property type="project" value="GO_Central"/>
</dbReference>
<dbReference type="GO" id="GO:0007200">
    <property type="term" value="P:phospholipase C-activating G protein-coupled receptor signaling pathway"/>
    <property type="evidence" value="ECO:0000318"/>
    <property type="project" value="GO_Central"/>
</dbReference>
<dbReference type="GO" id="GO:0007204">
    <property type="term" value="P:positive regulation of cytosolic calcium ion concentration"/>
    <property type="evidence" value="ECO:0000318"/>
    <property type="project" value="GO_Central"/>
</dbReference>
<dbReference type="CDD" id="cd15117">
    <property type="entry name" value="7tmA_FPR-like"/>
    <property type="match status" value="1"/>
</dbReference>
<dbReference type="FunFam" id="1.20.1070.10:FF:000034">
    <property type="entry name" value="G-protein coupled receptor 1"/>
    <property type="match status" value="1"/>
</dbReference>
<dbReference type="Gene3D" id="1.20.1070.10">
    <property type="entry name" value="Rhodopsin 7-helix transmembrane proteins"/>
    <property type="match status" value="1"/>
</dbReference>
<dbReference type="InterPro" id="IPR000826">
    <property type="entry name" value="Formyl_rcpt-rel"/>
</dbReference>
<dbReference type="InterPro" id="IPR000276">
    <property type="entry name" value="GPCR_Rhodpsn"/>
</dbReference>
<dbReference type="InterPro" id="IPR017452">
    <property type="entry name" value="GPCR_Rhodpsn_7TM"/>
</dbReference>
<dbReference type="PANTHER" id="PTHR24225">
    <property type="entry name" value="CHEMOTACTIC RECEPTOR"/>
    <property type="match status" value="1"/>
</dbReference>
<dbReference type="PANTHER" id="PTHR24225:SF0">
    <property type="entry name" value="N-FORMYL PEPTIDE RECEPTOR 2"/>
    <property type="match status" value="1"/>
</dbReference>
<dbReference type="Pfam" id="PF00001">
    <property type="entry name" value="7tm_1"/>
    <property type="match status" value="1"/>
</dbReference>
<dbReference type="PRINTS" id="PR00526">
    <property type="entry name" value="FMETLEUPHER"/>
</dbReference>
<dbReference type="PRINTS" id="PR00237">
    <property type="entry name" value="GPCRRHODOPSN"/>
</dbReference>
<dbReference type="SUPFAM" id="SSF81321">
    <property type="entry name" value="Family A G protein-coupled receptor-like"/>
    <property type="match status" value="1"/>
</dbReference>
<dbReference type="PROSITE" id="PS00237">
    <property type="entry name" value="G_PROTEIN_RECEP_F1_1"/>
    <property type="match status" value="1"/>
</dbReference>
<dbReference type="PROSITE" id="PS50262">
    <property type="entry name" value="G_PROTEIN_RECEP_F1_2"/>
    <property type="match status" value="1"/>
</dbReference>
<reference key="1">
    <citation type="journal article" date="1996" name="Immunogenetics">
        <title>Molecular evolution of the N-formyl peptide and C5a receptors in non-human primates.</title>
        <authorList>
            <person name="Alvarez V."/>
            <person name="Coto E."/>
            <person name="Sehen F."/>
            <person name="Gouzalek-Koces S."/>
            <person name="Lopez-Larrea C."/>
        </authorList>
    </citation>
    <scope>NUCLEOTIDE SEQUENCE [GENOMIC DNA]</scope>
</reference>
<feature type="chain" id="PRO_0000069450" description="N-formyl peptide receptor 2">
    <location>
        <begin position="1" status="less than"/>
        <end position="348" status="greater than"/>
    </location>
</feature>
<feature type="topological domain" description="Extracellular" evidence="3">
    <location>
        <begin position="1" status="less than"/>
        <end position="24"/>
    </location>
</feature>
<feature type="transmembrane region" description="Helical; Name=1" evidence="3">
    <location>
        <begin position="25"/>
        <end position="47"/>
    </location>
</feature>
<feature type="topological domain" description="Cytoplasmic" evidence="3">
    <location>
        <begin position="48"/>
        <end position="58"/>
    </location>
</feature>
<feature type="transmembrane region" description="Helical; Name=2" evidence="3">
    <location>
        <begin position="59"/>
        <end position="80"/>
    </location>
</feature>
<feature type="topological domain" description="Extracellular" evidence="3">
    <location>
        <begin position="81"/>
        <end position="97"/>
    </location>
</feature>
<feature type="transmembrane region" description="Helical; Name=3" evidence="3">
    <location>
        <begin position="98"/>
        <end position="118"/>
    </location>
</feature>
<feature type="topological domain" description="Cytoplasmic" evidence="3">
    <location>
        <begin position="119"/>
        <end position="137"/>
    </location>
</feature>
<feature type="transmembrane region" description="Helical; Name=4" evidence="3">
    <location>
        <begin position="138"/>
        <end position="159"/>
    </location>
</feature>
<feature type="topological domain" description="Extracellular" evidence="3">
    <location>
        <begin position="160"/>
        <end position="202"/>
    </location>
</feature>
<feature type="transmembrane region" description="Helical; Name=5" evidence="3">
    <location>
        <begin position="203"/>
        <end position="223"/>
    </location>
</feature>
<feature type="topological domain" description="Cytoplasmic" evidence="3">
    <location>
        <begin position="224"/>
        <end position="239"/>
    </location>
</feature>
<feature type="transmembrane region" description="Helical; Name=6" evidence="3">
    <location>
        <begin position="240"/>
        <end position="263"/>
    </location>
</feature>
<feature type="topological domain" description="Extracellular" evidence="3">
    <location>
        <begin position="264"/>
        <end position="283"/>
    </location>
</feature>
<feature type="transmembrane region" description="Helical; Name=7" evidence="3">
    <location>
        <begin position="284"/>
        <end position="303"/>
    </location>
</feature>
<feature type="topological domain" description="Cytoplasmic" evidence="3">
    <location>
        <begin position="304"/>
        <end position="348"/>
    </location>
</feature>
<feature type="region of interest" description="Disordered" evidence="5">
    <location>
        <begin position="323"/>
        <end position="348"/>
    </location>
</feature>
<feature type="compositionally biased region" description="Polar residues" evidence="5">
    <location>
        <begin position="326"/>
        <end position="335"/>
    </location>
</feature>
<feature type="glycosylation site" description="N-linked (GlcNAc...) asparagine" evidence="3">
    <location>
        <position position="1"/>
    </location>
</feature>
<feature type="disulfide bond" evidence="4">
    <location>
        <begin position="95"/>
        <end position="173"/>
    </location>
</feature>
<feature type="non-terminal residue">
    <location>
        <position position="1"/>
    </location>
</feature>
<feature type="non-terminal residue">
    <location>
        <position position="348"/>
    </location>
</feature>
<organism>
    <name type="scientific">Gorilla gorilla gorilla</name>
    <name type="common">Western lowland gorilla</name>
    <dbReference type="NCBI Taxonomy" id="9595"/>
    <lineage>
        <taxon>Eukaryota</taxon>
        <taxon>Metazoa</taxon>
        <taxon>Chordata</taxon>
        <taxon>Craniata</taxon>
        <taxon>Vertebrata</taxon>
        <taxon>Euteleostomi</taxon>
        <taxon>Mammalia</taxon>
        <taxon>Eutheria</taxon>
        <taxon>Euarchontoglires</taxon>
        <taxon>Primates</taxon>
        <taxon>Haplorrhini</taxon>
        <taxon>Catarrhini</taxon>
        <taxon>Hominidae</taxon>
        <taxon>Gorilla</taxon>
    </lineage>
</organism>
<comment type="function">
    <text evidence="1 2">Low affinity receptor for N-formyl-methionyl peptides, which are powerful neutrophil chemotactic factors (By similarity). Binding of FMLP to the receptor causes activation of neutrophils (By similarity). This response is mediated via a G-protein that activates a phosphatidylinositol-calcium second messenger system (By similarity). Receptor for the chemokine-like protein FAM19A5, mediating FAM19A5-stimulated macrophage chemotaxis and the inhibitory effect on TNFSF11/RANKL-induced osteoclast differentiation (By similarity).</text>
</comment>
<comment type="subunit">
    <text evidence="2">Interacts with APP; the interaction takes place at the cell surface and the complex is then rapidly internalized.</text>
</comment>
<comment type="subcellular location">
    <subcellularLocation>
        <location evidence="2">Cell membrane</location>
        <topology evidence="2">Multi-pass membrane protein</topology>
    </subcellularLocation>
    <text evidence="2">Associates with APP at the cell surface and the complex is then rapidly internalized.</text>
</comment>
<comment type="similarity">
    <text evidence="4">Belongs to the G-protein coupled receptor 1 family.</text>
</comment>
<protein>
    <recommendedName>
        <fullName>N-formyl peptide receptor 2</fullName>
    </recommendedName>
    <alternativeName>
        <fullName>FMLP-related receptor I</fullName>
        <shortName>FMLP-R-I</shortName>
    </alternativeName>
    <alternativeName>
        <fullName>Formyl peptide receptor-like 1</fullName>
    </alternativeName>
</protein>
<sequence>NFSTPLNEHEEVSYESAGYTVLRILPLVVLGVTFVLGVLGNGLVIWVAGFRMTRTVTTICYLNLALADFSFTATLPFLIVSMAMGEKWPFGWFLCKLIHIVVDINLFGSVFLIGFIALDRCICVLHPVWAQNHRTVSLAMKVIVGPWILALVLTLPVFLFLTTVTIPNGDTYCTFNFASWGGTPEERQKVAITMLTARGIIRFVIGFSLPMSIVAICYGLIAAKIHKKGMIKSSRPLRVLTAVVASFFICWFPFQLVALLGTVWLKEMLFYGKYKIIDILVNPTSSLAFFNSCLNPMLYVFVGQDFRERLIHSLPTSLERALSEDSAPTNDTAASCASPPAETELQAM</sequence>
<gene>
    <name type="primary">FPR2</name>
    <name type="synonym">FPRL1</name>
</gene>
<keyword id="KW-1003">Cell membrane</keyword>
<keyword id="KW-0145">Chemotaxis</keyword>
<keyword id="KW-1015">Disulfide bond</keyword>
<keyword id="KW-0297">G-protein coupled receptor</keyword>
<keyword id="KW-0325">Glycoprotein</keyword>
<keyword id="KW-0472">Membrane</keyword>
<keyword id="KW-0675">Receptor</keyword>
<keyword id="KW-1185">Reference proteome</keyword>
<keyword id="KW-0807">Transducer</keyword>
<keyword id="KW-0812">Transmembrane</keyword>
<keyword id="KW-1133">Transmembrane helix</keyword>
<name>FPR2_GORGO</name>
<evidence type="ECO:0000250" key="1">
    <source>
        <dbReference type="UniProtKB" id="O88536"/>
    </source>
</evidence>
<evidence type="ECO:0000250" key="2">
    <source>
        <dbReference type="UniProtKB" id="P25090"/>
    </source>
</evidence>
<evidence type="ECO:0000255" key="3"/>
<evidence type="ECO:0000255" key="4">
    <source>
        <dbReference type="PROSITE-ProRule" id="PRU00521"/>
    </source>
</evidence>
<evidence type="ECO:0000256" key="5">
    <source>
        <dbReference type="SAM" id="MobiDB-lite"/>
    </source>
</evidence>